<evidence type="ECO:0000255" key="1">
    <source>
        <dbReference type="HAMAP-Rule" id="MF_01550"/>
    </source>
</evidence>
<evidence type="ECO:0000305" key="2"/>
<dbReference type="EC" id="3.6.1.40" evidence="1"/>
<dbReference type="EMBL" id="AL590842">
    <property type="status" value="NOT_ANNOTATED_CDS"/>
    <property type="molecule type" value="Genomic_DNA"/>
</dbReference>
<dbReference type="EMBL" id="AE009952">
    <property type="status" value="NOT_ANNOTATED_CDS"/>
    <property type="molecule type" value="Genomic_DNA"/>
</dbReference>
<dbReference type="EMBL" id="AE017042">
    <property type="protein sequence ID" value="AAS63343.1"/>
    <property type="molecule type" value="Genomic_DNA"/>
</dbReference>
<dbReference type="SMR" id="Q74R94"/>
<dbReference type="EnsemblBacteria" id="AAS63343">
    <property type="protein sequence ID" value="AAS63343"/>
    <property type="gene ID" value="YP_3175"/>
</dbReference>
<dbReference type="KEGG" id="ypm:YP_3175"/>
<dbReference type="HOGENOM" id="CLU_025908_4_0_6"/>
<dbReference type="OMA" id="WQICVGA"/>
<dbReference type="UniPathway" id="UPA00908">
    <property type="reaction ID" value="UER00885"/>
</dbReference>
<dbReference type="Proteomes" id="UP000000815">
    <property type="component" value="Chromosome"/>
</dbReference>
<dbReference type="Proteomes" id="UP000001019">
    <property type="component" value="Chromosome"/>
</dbReference>
<dbReference type="Proteomes" id="UP000002490">
    <property type="component" value="Chromosome"/>
</dbReference>
<dbReference type="GO" id="GO:0004309">
    <property type="term" value="F:exopolyphosphatase activity"/>
    <property type="evidence" value="ECO:0007669"/>
    <property type="project" value="InterPro"/>
</dbReference>
<dbReference type="GO" id="GO:0008894">
    <property type="term" value="F:guanosine-5'-triphosphate,3'-diphosphate diphosphatase activity"/>
    <property type="evidence" value="ECO:0000318"/>
    <property type="project" value="GO_Central"/>
</dbReference>
<dbReference type="GO" id="GO:0015974">
    <property type="term" value="P:guanosine pentaphosphate catabolic process"/>
    <property type="evidence" value="ECO:0007669"/>
    <property type="project" value="InterPro"/>
</dbReference>
<dbReference type="GO" id="GO:0015970">
    <property type="term" value="P:guanosine tetraphosphate biosynthetic process"/>
    <property type="evidence" value="ECO:0007669"/>
    <property type="project" value="UniProtKB-UniRule"/>
</dbReference>
<dbReference type="GO" id="GO:0015949">
    <property type="term" value="P:nucleobase-containing small molecule interconversion"/>
    <property type="evidence" value="ECO:0000318"/>
    <property type="project" value="GO_Central"/>
</dbReference>
<dbReference type="CDD" id="cd24117">
    <property type="entry name" value="ASKHA_NBD_EcGppA-like"/>
    <property type="match status" value="1"/>
</dbReference>
<dbReference type="FunFam" id="1.10.3210.10:FF:000004">
    <property type="entry name" value="Guanosine-5'-triphosphate,3'-diphosphate pyrophosphatase"/>
    <property type="match status" value="1"/>
</dbReference>
<dbReference type="FunFam" id="3.30.420.150:FF:000001">
    <property type="entry name" value="Guanosine-5'-triphosphate,3'-diphosphate pyrophosphatase"/>
    <property type="match status" value="1"/>
</dbReference>
<dbReference type="FunFam" id="3.30.420.40:FF:000023">
    <property type="entry name" value="Guanosine-5'-triphosphate,3'-diphosphate pyrophosphatase"/>
    <property type="match status" value="1"/>
</dbReference>
<dbReference type="Gene3D" id="3.30.420.40">
    <property type="match status" value="1"/>
</dbReference>
<dbReference type="Gene3D" id="3.30.420.150">
    <property type="entry name" value="Exopolyphosphatase. Domain 2"/>
    <property type="match status" value="1"/>
</dbReference>
<dbReference type="Gene3D" id="1.10.3210.10">
    <property type="entry name" value="Hypothetical protein af1432"/>
    <property type="match status" value="1"/>
</dbReference>
<dbReference type="HAMAP" id="MF_01550">
    <property type="entry name" value="GppA"/>
    <property type="match status" value="1"/>
</dbReference>
<dbReference type="InterPro" id="IPR043129">
    <property type="entry name" value="ATPase_NBD"/>
</dbReference>
<dbReference type="InterPro" id="IPR022371">
    <property type="entry name" value="Exopolyphosphatase"/>
</dbReference>
<dbReference type="InterPro" id="IPR050273">
    <property type="entry name" value="GppA/Ppx_hydrolase"/>
</dbReference>
<dbReference type="InterPro" id="IPR023709">
    <property type="entry name" value="Guo-5TP_3DP_PyrP"/>
</dbReference>
<dbReference type="InterPro" id="IPR048950">
    <property type="entry name" value="Ppx_GppA_C"/>
</dbReference>
<dbReference type="InterPro" id="IPR003695">
    <property type="entry name" value="Ppx_GppA_N"/>
</dbReference>
<dbReference type="InterPro" id="IPR030673">
    <property type="entry name" value="PyroPPase_GppA_Ppx"/>
</dbReference>
<dbReference type="NCBIfam" id="TIGR03706">
    <property type="entry name" value="exo_poly_only"/>
    <property type="match status" value="1"/>
</dbReference>
<dbReference type="NCBIfam" id="NF008260">
    <property type="entry name" value="PRK11031.1"/>
    <property type="match status" value="1"/>
</dbReference>
<dbReference type="PANTHER" id="PTHR30005">
    <property type="entry name" value="EXOPOLYPHOSPHATASE"/>
    <property type="match status" value="1"/>
</dbReference>
<dbReference type="PANTHER" id="PTHR30005:SF0">
    <property type="entry name" value="RETROGRADE REGULATION PROTEIN 2"/>
    <property type="match status" value="1"/>
</dbReference>
<dbReference type="Pfam" id="PF02541">
    <property type="entry name" value="Ppx-GppA"/>
    <property type="match status" value="1"/>
</dbReference>
<dbReference type="Pfam" id="PF21447">
    <property type="entry name" value="Ppx-GppA_III"/>
    <property type="match status" value="1"/>
</dbReference>
<dbReference type="PIRSF" id="PIRSF001267">
    <property type="entry name" value="Pyrophosphatase_GppA_Ppx"/>
    <property type="match status" value="1"/>
</dbReference>
<dbReference type="SUPFAM" id="SSF53067">
    <property type="entry name" value="Actin-like ATPase domain"/>
    <property type="match status" value="2"/>
</dbReference>
<dbReference type="SUPFAM" id="SSF109604">
    <property type="entry name" value="HD-domain/PDEase-like"/>
    <property type="match status" value="1"/>
</dbReference>
<name>GPPA_YERPE</name>
<sequence>MMLSSTSLYAAIDLGSNSFHMLVVREVAGSIQTLARIKRKVRLAAGLDNQNHLSQEAMERGWQCLKLFSERLQDIPLDQIRVVATATLRLASNADEFLRTATEILGCPIQVISGEEEARLIYHGVAHTTGGPEQRLVVDIGGGSTELVTGNGAQANILVSLSMGCVTWLERYFGDRHLAKENFERAELAAHEMIKPVAQRFREHGWQVCVGASGTVQALQEIMVAQGMDELITLAKLQQLKQRAIQCGKLEELEIPGLTLERALVFPSGLSILIAIFQELSIESMTLAGGALREGLVYGMLHLPVEQDIRRRTLRNLQRRYLLDTEQAKRVSCLADNFFLQVEKEWHLDGRCREFLQNACLIHEIGLSVDFKHAPQHAAYLIRNLDLPGFTPAQKLLLSALLQNQSDTIDLSLLNQQNALPADMAQHLCRLLRLAIIFSSRRRDDTLPAVRLRADNNALYVLVPQGWLEQHPYRAEALEQESHWQSYVQWPLLLEELS</sequence>
<feature type="chain" id="PRO_0000194297" description="Guanosine-5'-triphosphate,3'-diphosphate pyrophosphatase">
    <location>
        <begin position="1"/>
        <end position="498"/>
    </location>
</feature>
<protein>
    <recommendedName>
        <fullName evidence="1">Guanosine-5'-triphosphate,3'-diphosphate pyrophosphatase</fullName>
        <ecNumber evidence="1">3.6.1.40</ecNumber>
    </recommendedName>
    <alternativeName>
        <fullName evidence="1">Guanosine pentaphosphate phosphohydrolase</fullName>
    </alternativeName>
    <alternativeName>
        <fullName evidence="1">pppGpp-5'-phosphohydrolase</fullName>
    </alternativeName>
</protein>
<organism>
    <name type="scientific">Yersinia pestis</name>
    <dbReference type="NCBI Taxonomy" id="632"/>
    <lineage>
        <taxon>Bacteria</taxon>
        <taxon>Pseudomonadati</taxon>
        <taxon>Pseudomonadota</taxon>
        <taxon>Gammaproteobacteria</taxon>
        <taxon>Enterobacterales</taxon>
        <taxon>Yersiniaceae</taxon>
        <taxon>Yersinia</taxon>
    </lineage>
</organism>
<keyword id="KW-0378">Hydrolase</keyword>
<keyword id="KW-1185">Reference proteome</keyword>
<comment type="function">
    <text evidence="1">Catalyzes the conversion of pppGpp to ppGpp. Guanosine pentaphosphate (pppGpp) is a cytoplasmic signaling molecule which together with ppGpp controls the 'stringent response', an adaptive process that allows bacteria to respond to amino acid starvation, resulting in the coordinated regulation of numerous cellular activities.</text>
</comment>
<comment type="catalytic activity">
    <reaction evidence="1">
        <text>guanosine 3'-diphosphate 5'-triphosphate + H2O = guanosine 3',5'-bis(diphosphate) + phosphate + H(+)</text>
        <dbReference type="Rhea" id="RHEA:13073"/>
        <dbReference type="ChEBI" id="CHEBI:15377"/>
        <dbReference type="ChEBI" id="CHEBI:15378"/>
        <dbReference type="ChEBI" id="CHEBI:43474"/>
        <dbReference type="ChEBI" id="CHEBI:77828"/>
        <dbReference type="ChEBI" id="CHEBI:142410"/>
        <dbReference type="EC" id="3.6.1.40"/>
    </reaction>
</comment>
<comment type="pathway">
    <text evidence="1">Purine metabolism; ppGpp biosynthesis; ppGpp from GTP: step 2/2.</text>
</comment>
<comment type="similarity">
    <text evidence="1">Belongs to the GppA/Ppx family. GppA subfamily.</text>
</comment>
<comment type="caution">
    <text evidence="2">In strain CO-92 it seems to be a pseudogene. It is interrupted by frameshifts in positions 90 and 143. The sequence has been verified by the authors and is believed to be correct.</text>
</comment>
<comment type="sequence caution" evidence="2">
    <conflict type="frameshift">
        <sequence resource="EMBL" id="AE009952"/>
    </conflict>
</comment>
<accession>Q74R94</accession>
<reference key="1">
    <citation type="journal article" date="2001" name="Nature">
        <title>Genome sequence of Yersinia pestis, the causative agent of plague.</title>
        <authorList>
            <person name="Parkhill J."/>
            <person name="Wren B.W."/>
            <person name="Thomson N.R."/>
            <person name="Titball R.W."/>
            <person name="Holden M.T.G."/>
            <person name="Prentice M.B."/>
            <person name="Sebaihia M."/>
            <person name="James K.D."/>
            <person name="Churcher C.M."/>
            <person name="Mungall K.L."/>
            <person name="Baker S."/>
            <person name="Basham D."/>
            <person name="Bentley S.D."/>
            <person name="Brooks K."/>
            <person name="Cerdeno-Tarraga A.-M."/>
            <person name="Chillingworth T."/>
            <person name="Cronin A."/>
            <person name="Davies R.M."/>
            <person name="Davis P."/>
            <person name="Dougan G."/>
            <person name="Feltwell T."/>
            <person name="Hamlin N."/>
            <person name="Holroyd S."/>
            <person name="Jagels K."/>
            <person name="Karlyshev A.V."/>
            <person name="Leather S."/>
            <person name="Moule S."/>
            <person name="Oyston P.C.F."/>
            <person name="Quail M.A."/>
            <person name="Rutherford K.M."/>
            <person name="Simmonds M."/>
            <person name="Skelton J."/>
            <person name="Stevens K."/>
            <person name="Whitehead S."/>
            <person name="Barrell B.G."/>
        </authorList>
    </citation>
    <scope>NUCLEOTIDE SEQUENCE [LARGE SCALE GENOMIC DNA]</scope>
    <source>
        <strain>CO-92 / Biovar Orientalis</strain>
    </source>
</reference>
<reference key="2">
    <citation type="journal article" date="2002" name="J. Bacteriol.">
        <title>Genome sequence of Yersinia pestis KIM.</title>
        <authorList>
            <person name="Deng W."/>
            <person name="Burland V."/>
            <person name="Plunkett G. III"/>
            <person name="Boutin A."/>
            <person name="Mayhew G.F."/>
            <person name="Liss P."/>
            <person name="Perna N.T."/>
            <person name="Rose D.J."/>
            <person name="Mau B."/>
            <person name="Zhou S."/>
            <person name="Schwartz D.C."/>
            <person name="Fetherston J.D."/>
            <person name="Lindler L.E."/>
            <person name="Brubaker R.R."/>
            <person name="Plano G.V."/>
            <person name="Straley S.C."/>
            <person name="McDonough K.A."/>
            <person name="Nilles M.L."/>
            <person name="Matson J.S."/>
            <person name="Blattner F.R."/>
            <person name="Perry R.D."/>
        </authorList>
    </citation>
    <scope>NUCLEOTIDE SEQUENCE [LARGE SCALE GENOMIC DNA]</scope>
    <source>
        <strain>KIM10+ / Biovar Mediaevalis</strain>
    </source>
</reference>
<reference key="3">
    <citation type="journal article" date="2004" name="DNA Res.">
        <title>Complete genome sequence of Yersinia pestis strain 91001, an isolate avirulent to humans.</title>
        <authorList>
            <person name="Song Y."/>
            <person name="Tong Z."/>
            <person name="Wang J."/>
            <person name="Wang L."/>
            <person name="Guo Z."/>
            <person name="Han Y."/>
            <person name="Zhang J."/>
            <person name="Pei D."/>
            <person name="Zhou D."/>
            <person name="Qin H."/>
            <person name="Pang X."/>
            <person name="Han Y."/>
            <person name="Zhai J."/>
            <person name="Li M."/>
            <person name="Cui B."/>
            <person name="Qi Z."/>
            <person name="Jin L."/>
            <person name="Dai R."/>
            <person name="Chen F."/>
            <person name="Li S."/>
            <person name="Ye C."/>
            <person name="Du Z."/>
            <person name="Lin W."/>
            <person name="Wang J."/>
            <person name="Yu J."/>
            <person name="Yang H."/>
            <person name="Wang J."/>
            <person name="Huang P."/>
            <person name="Yang R."/>
        </authorList>
    </citation>
    <scope>NUCLEOTIDE SEQUENCE [LARGE SCALE GENOMIC DNA]</scope>
    <source>
        <strain>91001 / Biovar Mediaevalis</strain>
    </source>
</reference>
<gene>
    <name evidence="1" type="primary">gppA</name>
    <name type="ordered locus">YPO3870</name>
    <name type="ordered locus">y0358</name>
    <name type="ordered locus">YP_3175</name>
</gene>
<proteinExistence type="inferred from homology"/>